<accession>Q8L4B2</accession>
<accession>O04033</accession>
<accession>Q9SNZ0</accession>
<proteinExistence type="evidence at protein level"/>
<comment type="function">
    <text evidence="1 5">Stimulates the transcription of various genes by recognizing and binding to a CCAAT motif in promoters (By similarity). Interacts with REF6 to directly regulate SOC1 transcription in response to flowering signals from photoperiod and gibberellic acid pathways (PubMed:25105952).</text>
</comment>
<comment type="subunit">
    <text evidence="5">Heterotrimeric transcription factor composed of three components, NF-YA, NF-YB and NF-YC. Interacts with NFYA2, NFYB2, CO and RGA. Interacts with REF6 (via N-terminus).</text>
</comment>
<comment type="interaction">
    <interactant intactId="EBI-2466050">
        <id>Q8L4B2</id>
    </interactant>
    <interactant intactId="EBI-618423">
        <id>Q9LKL2</id>
        <label>APRR1</label>
    </interactant>
    <organismsDiffer>false</organismsDiffer>
    <experiments>3</experiments>
</comment>
<comment type="interaction">
    <interactant intactId="EBI-2466050">
        <id>Q8L4B2</id>
    </interactant>
    <interactant intactId="EBI-15192959">
        <id>A0A178U8Q1</id>
        <label>AXX17_At5g59430</label>
    </interactant>
    <organismsDiffer>false</organismsDiffer>
    <experiments>3</experiments>
</comment>
<comment type="interaction">
    <interactant intactId="EBI-2466050">
        <id>Q8L4B2</id>
    </interactant>
    <interactant intactId="EBI-1639724">
        <id>Q39057</id>
        <label>CO</label>
    </interactant>
    <organismsDiffer>false</organismsDiffer>
    <experiments>3</experiments>
</comment>
<comment type="interaction">
    <interactant intactId="EBI-2466050">
        <id>Q8L4B2</id>
    </interactant>
    <interactant intactId="EBI-1112154">
        <id>O50055</id>
        <label>COL1</label>
    </interactant>
    <organismsDiffer>false</organismsDiffer>
    <experiments>3</experiments>
</comment>
<comment type="interaction">
    <interactant intactId="EBI-2466050">
        <id>Q8L4B2</id>
    </interactant>
    <interactant intactId="EBI-15192033">
        <id>O22800-2</id>
        <label>COL14</label>
    </interactant>
    <organismsDiffer>false</organismsDiffer>
    <experiments>3</experiments>
</comment>
<comment type="interaction">
    <interactant intactId="EBI-2466050">
        <id>Q8L4B2</id>
    </interactant>
    <interactant intactId="EBI-2465998">
        <id>Q9C7E8</id>
        <label>COL15</label>
    </interactant>
    <organismsDiffer>false</organismsDiffer>
    <experiments>3</experiments>
</comment>
<comment type="interaction">
    <interactant intactId="EBI-2466050">
        <id>Q8L4B2</id>
    </interactant>
    <interactant intactId="EBI-4435064">
        <id>Q8H1G0</id>
        <label>GATA28</label>
    </interactant>
    <organismsDiffer>false</organismsDiffer>
    <experiments>3</experiments>
</comment>
<comment type="interaction">
    <interactant intactId="EBI-2466050">
        <id>Q8L4B2</id>
    </interactant>
    <interactant intactId="EBI-5849461">
        <id>P94077</id>
        <label>LSD1</label>
    </interactant>
    <organismsDiffer>false</organismsDiffer>
    <experiments>4</experiments>
</comment>
<comment type="interaction">
    <interactant intactId="EBI-2466050">
        <id>Q8L4B2</id>
    </interactant>
    <interactant intactId="EBI-4461713">
        <id>Q8VY64</id>
        <label>NFYA4</label>
    </interactant>
    <organismsDiffer>false</organismsDiffer>
    <experiments>4</experiments>
</comment>
<comment type="interaction">
    <interactant intactId="EBI-2466050">
        <id>Q8L4B2</id>
    </interactant>
    <interactant intactId="EBI-15195195">
        <id>Q9LVJ7</id>
        <label>NFYA6</label>
    </interactant>
    <organismsDiffer>false</organismsDiffer>
    <experiments>3</experiments>
</comment>
<comment type="interaction">
    <interactant intactId="EBI-2466050">
        <id>Q8L4B2</id>
    </interactant>
    <interactant intactId="EBI-15192013">
        <id>Q9LNP6</id>
        <label>NFYA8</label>
    </interactant>
    <organismsDiffer>false</organismsDiffer>
    <experiments>3</experiments>
</comment>
<comment type="interaction">
    <interactant intactId="EBI-2466050">
        <id>Q8L4B2</id>
    </interactant>
    <interactant intactId="EBI-15191941">
        <id>Q945M9</id>
        <label>NFYA9</label>
    </interactant>
    <organismsDiffer>false</organismsDiffer>
    <experiments>3</experiments>
</comment>
<comment type="interaction">
    <interactant intactId="EBI-2466050">
        <id>Q8L4B2</id>
    </interactant>
    <interactant intactId="EBI-2126009">
        <id>Q9SLG0</id>
        <label>NFYB1</label>
    </interactant>
    <organismsDiffer>false</organismsDiffer>
    <experiments>3</experiments>
</comment>
<comment type="interaction">
    <interactant intactId="EBI-2466050">
        <id>Q8L4B2</id>
    </interactant>
    <interactant intactId="EBI-2475824">
        <id>Q67XJ2</id>
        <label>NFYB10</label>
    </interactant>
    <organismsDiffer>false</organismsDiffer>
    <experiments>3</experiments>
</comment>
<comment type="interaction">
    <interactant intactId="EBI-2466050">
        <id>Q8L4B2</id>
    </interactant>
    <interactant intactId="EBI-15192505">
        <id>Q9FGJ3</id>
        <label>NFYB2</label>
    </interactant>
    <organismsDiffer>false</organismsDiffer>
    <experiments>5</experiments>
</comment>
<comment type="interaction">
    <interactant intactId="EBI-2466050">
        <id>Q8L4B2</id>
    </interactant>
    <interactant intactId="EBI-4452064">
        <id>O23310</id>
        <label>NFYB3</label>
    </interactant>
    <organismsDiffer>false</organismsDiffer>
    <experiments>3</experiments>
</comment>
<comment type="interaction">
    <interactant intactId="EBI-2466050">
        <id>Q8L4B2</id>
    </interactant>
    <interactant intactId="EBI-1751677">
        <id>O04027</id>
        <label>NFYB4</label>
    </interactant>
    <organismsDiffer>false</organismsDiffer>
    <experiments>3</experiments>
</comment>
<comment type="interaction">
    <interactant intactId="EBI-2466050">
        <id>Q8L4B2</id>
    </interactant>
    <interactant intactId="EBI-2475759">
        <id>O82248</id>
        <label>NFYB5</label>
    </interactant>
    <organismsDiffer>false</organismsDiffer>
    <experiments>3</experiments>
</comment>
<comment type="interaction">
    <interactant intactId="EBI-2466050">
        <id>Q8L4B2</id>
    </interactant>
    <interactant intactId="EBI-15191739">
        <id>Q84W66-2</id>
        <label>NFYB6</label>
    </interactant>
    <organismsDiffer>false</organismsDiffer>
    <experiments>3</experiments>
</comment>
<comment type="interaction">
    <interactant intactId="EBI-2466050">
        <id>Q8L4B2</id>
    </interactant>
    <interactant intactId="EBI-4459822">
        <id>Q9SIT9</id>
        <label>NFYB7</label>
    </interactant>
    <organismsDiffer>false</organismsDiffer>
    <experiments>3</experiments>
</comment>
<comment type="interaction">
    <interactant intactId="EBI-2466050">
        <id>Q8L4B2</id>
    </interactant>
    <interactant intactId="EBI-15192579">
        <id>Q8VYK4</id>
        <label>NFYB8</label>
    </interactant>
    <organismsDiffer>false</organismsDiffer>
    <experiments>3</experiments>
</comment>
<comment type="interaction">
    <interactant intactId="EBI-2466050">
        <id>Q8L4B2</id>
    </interactant>
    <interactant intactId="EBI-15192297">
        <id>Q9LQF0</id>
        <label>TCP23</label>
    </interactant>
    <organismsDiffer>false</organismsDiffer>
    <experiments>4</experiments>
</comment>
<comment type="interaction">
    <interactant intactId="EBI-2466050">
        <id>Q8L4B2</id>
    </interactant>
    <interactant intactId="EBI-15192325">
        <id>Q8LPR5</id>
        <label>TCP4</label>
    </interactant>
    <organismsDiffer>false</organismsDiffer>
    <experiments>3</experiments>
</comment>
<comment type="interaction">
    <interactant intactId="EBI-2466050">
        <id>Q8L4B2</id>
    </interactant>
    <interactant intactId="EBI-15192251">
        <id>Q9FME3</id>
        <label>TCP5</label>
    </interactant>
    <organismsDiffer>false</organismsDiffer>
    <experiments>3</experiments>
</comment>
<comment type="interaction">
    <interactant intactId="EBI-2466050">
        <id>Q8L4B2</id>
    </interactant>
    <interactant intactId="EBI-15206004">
        <id>Q8GY55</id>
        <label>TIFY4B</label>
    </interactant>
    <organismsDiffer>false</organismsDiffer>
    <experiments>3</experiments>
</comment>
<comment type="subcellular location">
    <subcellularLocation>
        <location evidence="1">Nucleus</location>
    </subcellularLocation>
</comment>
<comment type="tissue specificity">
    <text evidence="3 4">Ubiquitous. Present in etiolated seedlings.</text>
</comment>
<comment type="similarity">
    <text evidence="6">Belongs to the NFYC/HAP5 subunit family.</text>
</comment>
<comment type="sequence caution" evidence="6">
    <conflict type="erroneous initiation">
        <sequence resource="EMBL-CDS" id="AAB70410"/>
    </conflict>
    <text>Truncated N-terminus.</text>
</comment>
<dbReference type="EMBL" id="AF193440">
    <property type="protein sequence ID" value="AAF06791.1"/>
    <property type="molecule type" value="mRNA"/>
</dbReference>
<dbReference type="EMBL" id="AC000106">
    <property type="protein sequence ID" value="AAB70410.1"/>
    <property type="status" value="ALT_INIT"/>
    <property type="molecule type" value="Genomic_DNA"/>
</dbReference>
<dbReference type="EMBL" id="CP002684">
    <property type="protein sequence ID" value="AEE28374.1"/>
    <property type="molecule type" value="Genomic_DNA"/>
</dbReference>
<dbReference type="EMBL" id="CP002684">
    <property type="protein sequence ID" value="AEE28375.1"/>
    <property type="molecule type" value="Genomic_DNA"/>
</dbReference>
<dbReference type="EMBL" id="CP002684">
    <property type="protein sequence ID" value="AEE28376.1"/>
    <property type="molecule type" value="Genomic_DNA"/>
</dbReference>
<dbReference type="EMBL" id="CP002684">
    <property type="protein sequence ID" value="AEE28377.1"/>
    <property type="molecule type" value="Genomic_DNA"/>
</dbReference>
<dbReference type="EMBL" id="AY126997">
    <property type="protein sequence ID" value="AAM83224.1"/>
    <property type="molecule type" value="mRNA"/>
</dbReference>
<dbReference type="EMBL" id="AY143827">
    <property type="protein sequence ID" value="AAN28766.1"/>
    <property type="molecule type" value="mRNA"/>
</dbReference>
<dbReference type="EMBL" id="AY085860">
    <property type="protein sequence ID" value="AAM63073.1"/>
    <property type="molecule type" value="mRNA"/>
</dbReference>
<dbReference type="PIR" id="E86221">
    <property type="entry name" value="E86221"/>
</dbReference>
<dbReference type="RefSeq" id="NP_172371.1">
    <property type="nucleotide sequence ID" value="NM_100768.4"/>
</dbReference>
<dbReference type="RefSeq" id="NP_849619.1">
    <property type="nucleotide sequence ID" value="NM_179288.3"/>
</dbReference>
<dbReference type="RefSeq" id="NP_973796.1">
    <property type="nucleotide sequence ID" value="NM_202067.2"/>
</dbReference>
<dbReference type="RefSeq" id="NP_973797.1">
    <property type="nucleotide sequence ID" value="NM_202068.2"/>
</dbReference>
<dbReference type="SMR" id="Q8L4B2"/>
<dbReference type="BioGRID" id="22658">
    <property type="interactions" value="80"/>
</dbReference>
<dbReference type="FunCoup" id="Q8L4B2">
    <property type="interactions" value="2243"/>
</dbReference>
<dbReference type="IntAct" id="Q8L4B2">
    <property type="interactions" value="70"/>
</dbReference>
<dbReference type="STRING" id="3702.Q8L4B2"/>
<dbReference type="iPTMnet" id="Q8L4B2"/>
<dbReference type="PaxDb" id="3702-AT1G08970.4"/>
<dbReference type="ProteomicsDB" id="251105"/>
<dbReference type="EnsemblPlants" id="AT1G08970.1">
    <property type="protein sequence ID" value="AT1G08970.1"/>
    <property type="gene ID" value="AT1G08970"/>
</dbReference>
<dbReference type="EnsemblPlants" id="AT1G08970.2">
    <property type="protein sequence ID" value="AT1G08970.2"/>
    <property type="gene ID" value="AT1G08970"/>
</dbReference>
<dbReference type="EnsemblPlants" id="AT1G08970.3">
    <property type="protein sequence ID" value="AT1G08970.3"/>
    <property type="gene ID" value="AT1G08970"/>
</dbReference>
<dbReference type="EnsemblPlants" id="AT1G08970.4">
    <property type="protein sequence ID" value="AT1G08970.4"/>
    <property type="gene ID" value="AT1G08970"/>
</dbReference>
<dbReference type="GeneID" id="837417"/>
<dbReference type="Gramene" id="AT1G08970.1">
    <property type="protein sequence ID" value="AT1G08970.1"/>
    <property type="gene ID" value="AT1G08970"/>
</dbReference>
<dbReference type="Gramene" id="AT1G08970.2">
    <property type="protein sequence ID" value="AT1G08970.2"/>
    <property type="gene ID" value="AT1G08970"/>
</dbReference>
<dbReference type="Gramene" id="AT1G08970.3">
    <property type="protein sequence ID" value="AT1G08970.3"/>
    <property type="gene ID" value="AT1G08970"/>
</dbReference>
<dbReference type="Gramene" id="AT1G08970.4">
    <property type="protein sequence ID" value="AT1G08970.4"/>
    <property type="gene ID" value="AT1G08970"/>
</dbReference>
<dbReference type="KEGG" id="ath:AT1G08970"/>
<dbReference type="Araport" id="AT1G08970"/>
<dbReference type="TAIR" id="AT1G08970">
    <property type="gene designation" value="NF-YC9"/>
</dbReference>
<dbReference type="eggNOG" id="KOG1657">
    <property type="taxonomic scope" value="Eukaryota"/>
</dbReference>
<dbReference type="HOGENOM" id="CLU_045277_0_0_1"/>
<dbReference type="InParanoid" id="Q8L4B2"/>
<dbReference type="OMA" id="QTNPMST"/>
<dbReference type="OrthoDB" id="1272441at2759"/>
<dbReference type="PhylomeDB" id="Q8L4B2"/>
<dbReference type="CD-CODE" id="4299E36E">
    <property type="entry name" value="Nucleolus"/>
</dbReference>
<dbReference type="PRO" id="PR:Q8L4B2"/>
<dbReference type="Proteomes" id="UP000006548">
    <property type="component" value="Chromosome 1"/>
</dbReference>
<dbReference type="ExpressionAtlas" id="Q8L4B2">
    <property type="expression patterns" value="baseline and differential"/>
</dbReference>
<dbReference type="GO" id="GO:0005737">
    <property type="term" value="C:cytoplasm"/>
    <property type="evidence" value="ECO:0007005"/>
    <property type="project" value="TAIR"/>
</dbReference>
<dbReference type="GO" id="GO:0005576">
    <property type="term" value="C:extracellular region"/>
    <property type="evidence" value="ECO:0007005"/>
    <property type="project" value="TAIR"/>
</dbReference>
<dbReference type="GO" id="GO:0005634">
    <property type="term" value="C:nucleus"/>
    <property type="evidence" value="ECO:0007005"/>
    <property type="project" value="TAIR"/>
</dbReference>
<dbReference type="GO" id="GO:0003700">
    <property type="term" value="F:DNA-binding transcription factor activity"/>
    <property type="evidence" value="ECO:0000250"/>
    <property type="project" value="TAIR"/>
</dbReference>
<dbReference type="GO" id="GO:0046982">
    <property type="term" value="F:protein heterodimerization activity"/>
    <property type="evidence" value="ECO:0007669"/>
    <property type="project" value="InterPro"/>
</dbReference>
<dbReference type="GO" id="GO:0043565">
    <property type="term" value="F:sequence-specific DNA binding"/>
    <property type="evidence" value="ECO:0000314"/>
    <property type="project" value="TAIR"/>
</dbReference>
<dbReference type="GO" id="GO:0000976">
    <property type="term" value="F:transcription cis-regulatory region binding"/>
    <property type="evidence" value="ECO:0000353"/>
    <property type="project" value="TAIR"/>
</dbReference>
<dbReference type="GO" id="GO:0009738">
    <property type="term" value="P:abscisic acid-activated signaling pathway"/>
    <property type="evidence" value="ECO:0000316"/>
    <property type="project" value="TAIR"/>
</dbReference>
<dbReference type="GO" id="GO:0009740">
    <property type="term" value="P:gibberellic acid mediated signaling pathway"/>
    <property type="evidence" value="ECO:0000316"/>
    <property type="project" value="TAIR"/>
</dbReference>
<dbReference type="GO" id="GO:2000306">
    <property type="term" value="P:positive regulation of photomorphogenesis"/>
    <property type="evidence" value="ECO:0000315"/>
    <property type="project" value="TAIR"/>
</dbReference>
<dbReference type="GO" id="GO:0010029">
    <property type="term" value="P:regulation of seed germination"/>
    <property type="evidence" value="ECO:0000316"/>
    <property type="project" value="TAIR"/>
</dbReference>
<dbReference type="CDD" id="cd22908">
    <property type="entry name" value="HFD_NFYC-like"/>
    <property type="match status" value="1"/>
</dbReference>
<dbReference type="FunFam" id="1.10.20.10:FF:000006">
    <property type="entry name" value="Nuclear transcription factor Y subunit gamma"/>
    <property type="match status" value="1"/>
</dbReference>
<dbReference type="Gene3D" id="1.10.20.10">
    <property type="entry name" value="Histone, subunit A"/>
    <property type="match status" value="1"/>
</dbReference>
<dbReference type="InterPro" id="IPR009072">
    <property type="entry name" value="Histone-fold"/>
</dbReference>
<dbReference type="InterPro" id="IPR007125">
    <property type="entry name" value="Histone_H2A/H2B/H3"/>
</dbReference>
<dbReference type="InterPro" id="IPR050568">
    <property type="entry name" value="Transcr_DNA_Rep_Reg"/>
</dbReference>
<dbReference type="PANTHER" id="PTHR10252">
    <property type="entry name" value="HISTONE-LIKE TRANSCRIPTION FACTOR CCAAT-RELATED"/>
    <property type="match status" value="1"/>
</dbReference>
<dbReference type="PANTHER" id="PTHR10252:SF106">
    <property type="entry name" value="NUCLEAR TRANSCRIPTION FACTOR Y SUBUNIT C-3-RELATED"/>
    <property type="match status" value="1"/>
</dbReference>
<dbReference type="Pfam" id="PF00125">
    <property type="entry name" value="Histone"/>
    <property type="match status" value="1"/>
</dbReference>
<dbReference type="SUPFAM" id="SSF47113">
    <property type="entry name" value="Histone-fold"/>
    <property type="match status" value="1"/>
</dbReference>
<feature type="chain" id="PRO_0000218258" description="Nuclear transcription factor Y subunit C-9">
    <location>
        <begin position="1"/>
        <end position="231"/>
    </location>
</feature>
<feature type="region of interest" description="Disordered" evidence="2">
    <location>
        <begin position="211"/>
        <end position="231"/>
    </location>
</feature>
<feature type="sequence conflict" description="In Ref. 1; AAF06791." evidence="6" ref="1">
    <original>N</original>
    <variation>K</variation>
    <location>
        <position position="78"/>
    </location>
</feature>
<evidence type="ECO:0000250" key="1"/>
<evidence type="ECO:0000256" key="2">
    <source>
        <dbReference type="SAM" id="MobiDB-lite"/>
    </source>
</evidence>
<evidence type="ECO:0000269" key="3">
    <source>
    </source>
</evidence>
<evidence type="ECO:0000269" key="4">
    <source>
    </source>
</evidence>
<evidence type="ECO:0000269" key="5">
    <source>
    </source>
</evidence>
<evidence type="ECO:0000305" key="6"/>
<sequence length="231" mass="25640">MDQQDHGQSGAMNYGTNPYQTNPMSTTAATVAGGAAQPGQLAFHQIHQQQQQQQLAQQLQAFWENQFKEIEKTTDFKNHSLPLARIKKIMKADEDVRMISAEAPVVFARACEMFILELTLRSWNHTEENKRRTLQKNDIAAAVTRTDIFDFLVDIVPREDLRDEVLGSIPRGTVPEAAAAGYPYGYLPAGTAPIGNPGMVMGNPGGAYPPNPYMGQPMWQQQAPDQPDQEN</sequence>
<protein>
    <recommendedName>
        <fullName>Nuclear transcription factor Y subunit C-9</fullName>
        <shortName>AtNF-YC-9</shortName>
    </recommendedName>
    <alternativeName>
        <fullName>Transcriptional activator HAP5C</fullName>
    </alternativeName>
</protein>
<gene>
    <name type="primary">NFYC9</name>
    <name type="synonym">HAP5C</name>
    <name type="ordered locus">At1g08970</name>
    <name type="ORF">F7G19.16</name>
</gene>
<keyword id="KW-0010">Activator</keyword>
<keyword id="KW-0238">DNA-binding</keyword>
<keyword id="KW-0539">Nucleus</keyword>
<keyword id="KW-1185">Reference proteome</keyword>
<keyword id="KW-0804">Transcription</keyword>
<keyword id="KW-0805">Transcription regulation</keyword>
<name>NFYC9_ARATH</name>
<reference key="1">
    <citation type="submission" date="1999-10" db="EMBL/GenBank/DDBJ databases">
        <title>Manipulation of the expression of heme activated protein HAP5c gene in transgenic plants.</title>
        <authorList>
            <person name="Gherraby W."/>
            <person name="Pateraki I."/>
            <person name="Makris A.M."/>
            <person name="Sanmartin M."/>
            <person name="Chatzopoulos P."/>
            <person name="Kanellis A.K."/>
        </authorList>
    </citation>
    <scope>NUCLEOTIDE SEQUENCE [MRNA]</scope>
</reference>
<reference key="2">
    <citation type="journal article" date="2000" name="Nature">
        <title>Sequence and analysis of chromosome 1 of the plant Arabidopsis thaliana.</title>
        <authorList>
            <person name="Theologis A."/>
            <person name="Ecker J.R."/>
            <person name="Palm C.J."/>
            <person name="Federspiel N.A."/>
            <person name="Kaul S."/>
            <person name="White O."/>
            <person name="Alonso J."/>
            <person name="Altafi H."/>
            <person name="Araujo R."/>
            <person name="Bowman C.L."/>
            <person name="Brooks S.Y."/>
            <person name="Buehler E."/>
            <person name="Chan A."/>
            <person name="Chao Q."/>
            <person name="Chen H."/>
            <person name="Cheuk R.F."/>
            <person name="Chin C.W."/>
            <person name="Chung M.K."/>
            <person name="Conn L."/>
            <person name="Conway A.B."/>
            <person name="Conway A.R."/>
            <person name="Creasy T.H."/>
            <person name="Dewar K."/>
            <person name="Dunn P."/>
            <person name="Etgu P."/>
            <person name="Feldblyum T.V."/>
            <person name="Feng J.-D."/>
            <person name="Fong B."/>
            <person name="Fujii C.Y."/>
            <person name="Gill J.E."/>
            <person name="Goldsmith A.D."/>
            <person name="Haas B."/>
            <person name="Hansen N.F."/>
            <person name="Hughes B."/>
            <person name="Huizar L."/>
            <person name="Hunter J.L."/>
            <person name="Jenkins J."/>
            <person name="Johnson-Hopson C."/>
            <person name="Khan S."/>
            <person name="Khaykin E."/>
            <person name="Kim C.J."/>
            <person name="Koo H.L."/>
            <person name="Kremenetskaia I."/>
            <person name="Kurtz D.B."/>
            <person name="Kwan A."/>
            <person name="Lam B."/>
            <person name="Langin-Hooper S."/>
            <person name="Lee A."/>
            <person name="Lee J.M."/>
            <person name="Lenz C.A."/>
            <person name="Li J.H."/>
            <person name="Li Y.-P."/>
            <person name="Lin X."/>
            <person name="Liu S.X."/>
            <person name="Liu Z.A."/>
            <person name="Luros J.S."/>
            <person name="Maiti R."/>
            <person name="Marziali A."/>
            <person name="Militscher J."/>
            <person name="Miranda M."/>
            <person name="Nguyen M."/>
            <person name="Nierman W.C."/>
            <person name="Osborne B.I."/>
            <person name="Pai G."/>
            <person name="Peterson J."/>
            <person name="Pham P.K."/>
            <person name="Rizzo M."/>
            <person name="Rooney T."/>
            <person name="Rowley D."/>
            <person name="Sakano H."/>
            <person name="Salzberg S.L."/>
            <person name="Schwartz J.R."/>
            <person name="Shinn P."/>
            <person name="Southwick A.M."/>
            <person name="Sun H."/>
            <person name="Tallon L.J."/>
            <person name="Tambunga G."/>
            <person name="Toriumi M.J."/>
            <person name="Town C.D."/>
            <person name="Utterback T."/>
            <person name="Van Aken S."/>
            <person name="Vaysberg M."/>
            <person name="Vysotskaia V.S."/>
            <person name="Walker M."/>
            <person name="Wu D."/>
            <person name="Yu G."/>
            <person name="Fraser C.M."/>
            <person name="Venter J.C."/>
            <person name="Davis R.W."/>
        </authorList>
    </citation>
    <scope>NUCLEOTIDE SEQUENCE [LARGE SCALE GENOMIC DNA]</scope>
    <source>
        <strain>cv. Columbia</strain>
    </source>
</reference>
<reference key="3">
    <citation type="journal article" date="2017" name="Plant J.">
        <title>Araport11: a complete reannotation of the Arabidopsis thaliana reference genome.</title>
        <authorList>
            <person name="Cheng C.Y."/>
            <person name="Krishnakumar V."/>
            <person name="Chan A.P."/>
            <person name="Thibaud-Nissen F."/>
            <person name="Schobel S."/>
            <person name="Town C.D."/>
        </authorList>
    </citation>
    <scope>GENOME REANNOTATION</scope>
    <source>
        <strain>cv. Columbia</strain>
    </source>
</reference>
<reference key="4">
    <citation type="journal article" date="2003" name="Science">
        <title>Empirical analysis of transcriptional activity in the Arabidopsis genome.</title>
        <authorList>
            <person name="Yamada K."/>
            <person name="Lim J."/>
            <person name="Dale J.M."/>
            <person name="Chen H."/>
            <person name="Shinn P."/>
            <person name="Palm C.J."/>
            <person name="Southwick A.M."/>
            <person name="Wu H.C."/>
            <person name="Kim C.J."/>
            <person name="Nguyen M."/>
            <person name="Pham P.K."/>
            <person name="Cheuk R.F."/>
            <person name="Karlin-Newmann G."/>
            <person name="Liu S.X."/>
            <person name="Lam B."/>
            <person name="Sakano H."/>
            <person name="Wu T."/>
            <person name="Yu G."/>
            <person name="Miranda M."/>
            <person name="Quach H.L."/>
            <person name="Tripp M."/>
            <person name="Chang C.H."/>
            <person name="Lee J.M."/>
            <person name="Toriumi M.J."/>
            <person name="Chan M.M."/>
            <person name="Tang C.C."/>
            <person name="Onodera C.S."/>
            <person name="Deng J.M."/>
            <person name="Akiyama K."/>
            <person name="Ansari Y."/>
            <person name="Arakawa T."/>
            <person name="Banh J."/>
            <person name="Banno F."/>
            <person name="Bowser L."/>
            <person name="Brooks S.Y."/>
            <person name="Carninci P."/>
            <person name="Chao Q."/>
            <person name="Choy N."/>
            <person name="Enju A."/>
            <person name="Goldsmith A.D."/>
            <person name="Gurjal M."/>
            <person name="Hansen N.F."/>
            <person name="Hayashizaki Y."/>
            <person name="Johnson-Hopson C."/>
            <person name="Hsuan V.W."/>
            <person name="Iida K."/>
            <person name="Karnes M."/>
            <person name="Khan S."/>
            <person name="Koesema E."/>
            <person name="Ishida J."/>
            <person name="Jiang P.X."/>
            <person name="Jones T."/>
            <person name="Kawai J."/>
            <person name="Kamiya A."/>
            <person name="Meyers C."/>
            <person name="Nakajima M."/>
            <person name="Narusaka M."/>
            <person name="Seki M."/>
            <person name="Sakurai T."/>
            <person name="Satou M."/>
            <person name="Tamse R."/>
            <person name="Vaysberg M."/>
            <person name="Wallender E.K."/>
            <person name="Wong C."/>
            <person name="Yamamura Y."/>
            <person name="Yuan S."/>
            <person name="Shinozaki K."/>
            <person name="Davis R.W."/>
            <person name="Theologis A."/>
            <person name="Ecker J.R."/>
        </authorList>
    </citation>
    <scope>NUCLEOTIDE SEQUENCE [LARGE SCALE MRNA]</scope>
    <source>
        <strain>cv. Columbia</strain>
    </source>
</reference>
<reference key="5">
    <citation type="submission" date="2002-03" db="EMBL/GenBank/DDBJ databases">
        <title>Full-length cDNA from Arabidopsis thaliana.</title>
        <authorList>
            <person name="Brover V.V."/>
            <person name="Troukhan M.E."/>
            <person name="Alexandrov N.A."/>
            <person name="Lu Y.-P."/>
            <person name="Flavell R.B."/>
            <person name="Feldmann K.A."/>
        </authorList>
    </citation>
    <scope>NUCLEOTIDE SEQUENCE [LARGE SCALE MRNA]</scope>
</reference>
<reference key="6">
    <citation type="journal article" date="2002" name="Gene">
        <title>Regulation of novel members of the Arabidopsis thaliana CCAAT-binding nuclear factor Y subunits.</title>
        <authorList>
            <person name="Gusmaroli G."/>
            <person name="Tonelli C."/>
            <person name="Mantovani R."/>
        </authorList>
    </citation>
    <scope>GENE FAMILY</scope>
    <scope>NOMENCLATURE</scope>
    <scope>TISSUE SPECIFICITY</scope>
</reference>
<reference key="7">
    <citation type="journal article" date="2007" name="Plant Physiol.">
        <title>The GCR1, GPA1, PRN1, NF-Y signal chain mediates both blue light and abscisic acid responses in Arabidopsis.</title>
        <authorList>
            <person name="Warpeha K.M."/>
            <person name="Upadhyay S."/>
            <person name="Yeh J."/>
            <person name="Adamiak J."/>
            <person name="Hawkins S.I."/>
            <person name="Lapik Y.R."/>
            <person name="Anderson M.B."/>
            <person name="Kaufman L.S."/>
        </authorList>
    </citation>
    <scope>TISSUE SPECIFICITY</scope>
    <source>
        <strain>cv. Columbia</strain>
        <strain>cv. Wassilewskija</strain>
    </source>
</reference>
<reference key="8">
    <citation type="journal article" date="2014" name="Nat. Commun.">
        <title>Nuclear factor Y-mediated H3K27me3 demethylation of the SOC1 locus orchestrates flowering responses of Arabidopsis.</title>
        <authorList>
            <person name="Hou X."/>
            <person name="Zhou J."/>
            <person name="Liu C."/>
            <person name="Liu L."/>
            <person name="Shen L."/>
            <person name="Yu H."/>
        </authorList>
    </citation>
    <scope>FUNCTION</scope>
    <scope>INTERACTION WITH NFYA2; NFYB2; REF6; CO AND RGA</scope>
</reference>
<organism>
    <name type="scientific">Arabidopsis thaliana</name>
    <name type="common">Mouse-ear cress</name>
    <dbReference type="NCBI Taxonomy" id="3702"/>
    <lineage>
        <taxon>Eukaryota</taxon>
        <taxon>Viridiplantae</taxon>
        <taxon>Streptophyta</taxon>
        <taxon>Embryophyta</taxon>
        <taxon>Tracheophyta</taxon>
        <taxon>Spermatophyta</taxon>
        <taxon>Magnoliopsida</taxon>
        <taxon>eudicotyledons</taxon>
        <taxon>Gunneridae</taxon>
        <taxon>Pentapetalae</taxon>
        <taxon>rosids</taxon>
        <taxon>malvids</taxon>
        <taxon>Brassicales</taxon>
        <taxon>Brassicaceae</taxon>
        <taxon>Camelineae</taxon>
        <taxon>Arabidopsis</taxon>
    </lineage>
</organism>